<sequence>MEDFVRQCFNPMIVELAEKAMKEYGEDLKIETNKFAAICTHLEVCFMYSDFHFINEQGESIVVELDDPNALLKHRFEIIEGRDRTMAWTVVNSICNTTGAEKPKFLPDLYDYKENRFIEIGVTRREVHIYYLEKANKIKSENTHIHIFSFTGEEMATKADYTLDEESRARIKTRLFTIRQEMANRGLWDSFVSPKEAKKQLKKNLKSQELCAGLPTKVSRRTSPALRILEPMWMDSNRTAALRASFLKCPKK</sequence>
<accession>P0DJR9</accession>
<organismHost>
    <name type="scientific">Aves</name>
    <dbReference type="NCBI Taxonomy" id="8782"/>
</organismHost>
<organismHost>
    <name type="scientific">Cetacea</name>
    <name type="common">whales</name>
    <dbReference type="NCBI Taxonomy" id="9721"/>
</organismHost>
<organismHost>
    <name type="scientific">Homo sapiens</name>
    <name type="common">Human</name>
    <dbReference type="NCBI Taxonomy" id="9606"/>
</organismHost>
<organismHost>
    <name type="scientific">Phocidae</name>
    <name type="common">true seals</name>
    <dbReference type="NCBI Taxonomy" id="9709"/>
</organismHost>
<organismHost>
    <name type="scientific">Sus scrofa</name>
    <name type="common">Pig</name>
    <dbReference type="NCBI Taxonomy" id="9823"/>
</organismHost>
<protein>
    <recommendedName>
        <fullName>Protein PA-X</fullName>
    </recommendedName>
</protein>
<proteinExistence type="inferred from homology"/>
<comment type="function">
    <text evidence="1 4">Plays a major role in the shutoff of the host protein expression by cleaving mRNAs probably via an endonuclease activity. This host shutoff allows the virus to escape from the host antiviral response (By similarity). Hijacks host RNA splicing machinery to selectively target host RNAs containing introns for destruction. This may explain the preferential degradation of RNAs that have undergone co- or post-transcriptional processing (By similarity).</text>
</comment>
<comment type="subcellular location">
    <subcellularLocation>
        <location evidence="4">Host cytoplasm</location>
    </subcellularLocation>
    <subcellularLocation>
        <location evidence="4">Host nucleus</location>
    </subcellularLocation>
</comment>
<comment type="alternative products">
    <event type="ribosomal frameshifting"/>
    <isoform>
        <id>P0DJR9-1</id>
        <name>PA-X</name>
        <sequence type="displayed"/>
    </isoform>
    <isoform>
        <id>Q38SQ1-1</id>
        <name>PA</name>
        <sequence type="external"/>
    </isoform>
</comment>
<comment type="domain">
    <text evidence="1 4">The probable endonuclease active site in the N-terminus and the basic amino acid cluster in the C-terminus are important for the shutoff activity. The C-terminus acts as a nuclear localization signal (By similarity). The C-terminus is recruited to host protein complexes involved in nuclear Pol II RNA processing (By similarity).</text>
</comment>
<comment type="similarity">
    <text evidence="6">Belongs to the influenza viruses PA-X family.</text>
</comment>
<organism>
    <name type="scientific">Influenza A virus (strain A/Hong Kong/5/1983 H3N2)</name>
    <dbReference type="NCBI Taxonomy" id="387159"/>
    <lineage>
        <taxon>Viruses</taxon>
        <taxon>Riboviria</taxon>
        <taxon>Orthornavirae</taxon>
        <taxon>Negarnaviricota</taxon>
        <taxon>Polyploviricotina</taxon>
        <taxon>Insthoviricetes</taxon>
        <taxon>Articulavirales</taxon>
        <taxon>Orthomyxoviridae</taxon>
        <taxon>Alphainfluenzavirus</taxon>
        <taxon>Alphainfluenzavirus influenzae</taxon>
        <taxon>Influenza A virus</taxon>
    </lineage>
</organism>
<name>PAX_I83A8</name>
<feature type="chain" id="PRO_0000419382" description="Protein PA-X">
    <location>
        <begin position="1"/>
        <end position="252"/>
    </location>
</feature>
<feature type="active site" evidence="2">
    <location>
        <position position="80"/>
    </location>
</feature>
<feature type="active site" evidence="2">
    <location>
        <position position="108"/>
    </location>
</feature>
<feature type="site" description="Important for efficient shutoff activity" evidence="5">
    <location>
        <position position="28"/>
    </location>
</feature>
<feature type="site" description="Important for efficient shutoff activity" evidence="5">
    <location>
        <position position="65"/>
    </location>
</feature>
<feature type="site" description="Important for efficient shutoff activity and nuclear localization" evidence="4">
    <location>
        <position position="195"/>
    </location>
</feature>
<feature type="site" description="Important for efficient shutoff activity and nuclear localization" evidence="4">
    <location>
        <position position="198"/>
    </location>
</feature>
<feature type="site" description="Important for efficient shutoff activity and nuclear localization" evidence="4">
    <location>
        <position position="199"/>
    </location>
</feature>
<feature type="site" description="Important for efficient shutoff activity" evidence="3">
    <location>
        <position position="202"/>
    </location>
</feature>
<feature type="site" description="Important for efficient shutoff activity" evidence="3">
    <location>
        <position position="203"/>
    </location>
</feature>
<feature type="site" description="Important for efficient shutoff activity" evidence="3">
    <location>
        <position position="206"/>
    </location>
</feature>
<reference key="1">
    <citation type="submission" date="2005-10" db="EMBL/GenBank/DDBJ databases">
        <title>The NIAID influenza genome sequencing project.</title>
        <authorList>
            <person name="Ghedin E."/>
            <person name="Spiro D."/>
            <person name="Miller N."/>
            <person name="Zaborsky J."/>
            <person name="Feldblyum T."/>
            <person name="Subbu V."/>
            <person name="Shumway M."/>
            <person name="Sparenborg J."/>
            <person name="Groveman L."/>
            <person name="Halpin R."/>
            <person name="Sitz J."/>
            <person name="Koo H."/>
            <person name="Salzberg S.L."/>
            <person name="Webster R.G."/>
            <person name="Hoffmann E."/>
            <person name="Krauss S."/>
            <person name="Naeve C."/>
            <person name="Bao Y."/>
            <person name="Bolotov P."/>
            <person name="Dernovoy D."/>
            <person name="Kiryutin B."/>
            <person name="Lipman D.J."/>
            <person name="Tatusova T."/>
        </authorList>
    </citation>
    <scope>NUCLEOTIDE SEQUENCE [GENOMIC RNA]</scope>
</reference>
<evidence type="ECO:0000250" key="1">
    <source>
        <dbReference type="UniProtKB" id="P0CK64"/>
    </source>
</evidence>
<evidence type="ECO:0000250" key="2">
    <source>
        <dbReference type="UniProtKB" id="P0CK68"/>
    </source>
</evidence>
<evidence type="ECO:0000250" key="3">
    <source>
        <dbReference type="UniProtKB" id="P0DJW8"/>
    </source>
</evidence>
<evidence type="ECO:0000250" key="4">
    <source>
        <dbReference type="UniProtKB" id="P0DXO5"/>
    </source>
</evidence>
<evidence type="ECO:0000250" key="5">
    <source>
        <dbReference type="UniProtKB" id="P0DXO6"/>
    </source>
</evidence>
<evidence type="ECO:0000305" key="6"/>
<gene>
    <name type="primary">PA</name>
</gene>
<dbReference type="EMBL" id="CY003741">
    <property type="status" value="NOT_ANNOTATED_CDS"/>
    <property type="molecule type" value="Genomic_RNA"/>
</dbReference>
<dbReference type="SMR" id="P0DJR9"/>
<dbReference type="Proteomes" id="UP000167548">
    <property type="component" value="Genome"/>
</dbReference>
<dbReference type="GO" id="GO:0003723">
    <property type="term" value="F:RNA binding"/>
    <property type="evidence" value="ECO:0007669"/>
    <property type="project" value="InterPro"/>
</dbReference>
<dbReference type="GO" id="GO:0039694">
    <property type="term" value="P:viral RNA genome replication"/>
    <property type="evidence" value="ECO:0007669"/>
    <property type="project" value="InterPro"/>
</dbReference>
<dbReference type="GO" id="GO:0075523">
    <property type="term" value="P:viral translational frameshifting"/>
    <property type="evidence" value="ECO:0007669"/>
    <property type="project" value="UniProtKB-KW"/>
</dbReference>
<dbReference type="FunFam" id="3.40.91.90:FF:000001">
    <property type="entry name" value="Polymerase acidic protein"/>
    <property type="match status" value="1"/>
</dbReference>
<dbReference type="Gene3D" id="3.40.91.90">
    <property type="entry name" value="Influenza RNA-dependent RNA polymerase subunit PA, endonuclease domain"/>
    <property type="match status" value="1"/>
</dbReference>
<dbReference type="InterPro" id="IPR001009">
    <property type="entry name" value="PA/PA-X"/>
</dbReference>
<dbReference type="InterPro" id="IPR038372">
    <property type="entry name" value="PA/PA-X_sf"/>
</dbReference>
<dbReference type="Pfam" id="PF00603">
    <property type="entry name" value="Flu_PA"/>
    <property type="match status" value="1"/>
</dbReference>
<keyword id="KW-1132">Decay of host mRNAs by virus</keyword>
<keyword id="KW-1262">Eukaryotic host gene expression shutoff by virus</keyword>
<keyword id="KW-1035">Host cytoplasm</keyword>
<keyword id="KW-1190">Host gene expression shutoff by virus</keyword>
<keyword id="KW-1192">Host mRNA suppression by virus</keyword>
<keyword id="KW-1048">Host nucleus</keyword>
<keyword id="KW-0945">Host-virus interaction</keyword>
<keyword id="KW-0688">Ribosomal frameshifting</keyword>